<reference key="1">
    <citation type="journal article" date="2001" name="J. Bacteriol.">
        <title>The alkane hydroxylase gene of Burkholderia cepacia RR10 is under catabolite repression control.</title>
        <authorList>
            <person name="Marin M.M."/>
            <person name="Smits T.H.M."/>
            <person name="Van Beilen J.B."/>
            <person name="Rojo F."/>
        </authorList>
    </citation>
    <scope>NUCLEOTIDE SEQUENCE [GENOMIC DNA]</scope>
    <source>
        <strain>RR10</strain>
    </source>
</reference>
<feature type="chain" id="PRO_0000122021" description="Serine--tRNA ligase">
    <location>
        <begin position="1"/>
        <end position="433"/>
    </location>
</feature>
<feature type="binding site" evidence="1">
    <location>
        <begin position="235"/>
        <end position="237"/>
    </location>
    <ligand>
        <name>L-serine</name>
        <dbReference type="ChEBI" id="CHEBI:33384"/>
    </ligand>
</feature>
<feature type="binding site" evidence="1">
    <location>
        <begin position="266"/>
        <end position="268"/>
    </location>
    <ligand>
        <name>ATP</name>
        <dbReference type="ChEBI" id="CHEBI:30616"/>
    </ligand>
</feature>
<feature type="binding site" evidence="1">
    <location>
        <position position="289"/>
    </location>
    <ligand>
        <name>L-serine</name>
        <dbReference type="ChEBI" id="CHEBI:33384"/>
    </ligand>
</feature>
<feature type="binding site" evidence="1">
    <location>
        <begin position="353"/>
        <end position="356"/>
    </location>
    <ligand>
        <name>ATP</name>
        <dbReference type="ChEBI" id="CHEBI:30616"/>
    </ligand>
</feature>
<feature type="binding site" evidence="1">
    <location>
        <position position="388"/>
    </location>
    <ligand>
        <name>L-serine</name>
        <dbReference type="ChEBI" id="CHEBI:33384"/>
    </ligand>
</feature>
<protein>
    <recommendedName>
        <fullName evidence="1">Serine--tRNA ligase</fullName>
        <ecNumber evidence="1">6.1.1.11</ecNumber>
    </recommendedName>
    <alternativeName>
        <fullName evidence="1">Seryl-tRNA synthetase</fullName>
        <shortName evidence="1">SerRS</shortName>
    </alternativeName>
    <alternativeName>
        <fullName evidence="1">Seryl-tRNA(Ser/Sec) synthetase</fullName>
    </alternativeName>
</protein>
<organism>
    <name type="scientific">Burkholderia cepacia</name>
    <name type="common">Pseudomonas cepacia</name>
    <dbReference type="NCBI Taxonomy" id="292"/>
    <lineage>
        <taxon>Bacteria</taxon>
        <taxon>Pseudomonadati</taxon>
        <taxon>Pseudomonadota</taxon>
        <taxon>Betaproteobacteria</taxon>
        <taxon>Burkholderiales</taxon>
        <taxon>Burkholderiaceae</taxon>
        <taxon>Burkholderia</taxon>
        <taxon>Burkholderia cepacia complex</taxon>
    </lineage>
</organism>
<name>SYS_BURCE</name>
<keyword id="KW-0030">Aminoacyl-tRNA synthetase</keyword>
<keyword id="KW-0067">ATP-binding</keyword>
<keyword id="KW-0963">Cytoplasm</keyword>
<keyword id="KW-0436">Ligase</keyword>
<keyword id="KW-0547">Nucleotide-binding</keyword>
<keyword id="KW-0648">Protein biosynthesis</keyword>
<comment type="function">
    <text evidence="1">Catalyzes the attachment of serine to tRNA(Ser). Is also able to aminoacylate tRNA(Sec) with serine, to form the misacylated tRNA L-seryl-tRNA(Sec), which will be further converted into selenocysteinyl-tRNA(Sec).</text>
</comment>
<comment type="catalytic activity">
    <reaction evidence="1">
        <text>tRNA(Ser) + L-serine + ATP = L-seryl-tRNA(Ser) + AMP + diphosphate + H(+)</text>
        <dbReference type="Rhea" id="RHEA:12292"/>
        <dbReference type="Rhea" id="RHEA-COMP:9669"/>
        <dbReference type="Rhea" id="RHEA-COMP:9703"/>
        <dbReference type="ChEBI" id="CHEBI:15378"/>
        <dbReference type="ChEBI" id="CHEBI:30616"/>
        <dbReference type="ChEBI" id="CHEBI:33019"/>
        <dbReference type="ChEBI" id="CHEBI:33384"/>
        <dbReference type="ChEBI" id="CHEBI:78442"/>
        <dbReference type="ChEBI" id="CHEBI:78533"/>
        <dbReference type="ChEBI" id="CHEBI:456215"/>
        <dbReference type="EC" id="6.1.1.11"/>
    </reaction>
</comment>
<comment type="catalytic activity">
    <reaction evidence="1">
        <text>tRNA(Sec) + L-serine + ATP = L-seryl-tRNA(Sec) + AMP + diphosphate + H(+)</text>
        <dbReference type="Rhea" id="RHEA:42580"/>
        <dbReference type="Rhea" id="RHEA-COMP:9742"/>
        <dbReference type="Rhea" id="RHEA-COMP:10128"/>
        <dbReference type="ChEBI" id="CHEBI:15378"/>
        <dbReference type="ChEBI" id="CHEBI:30616"/>
        <dbReference type="ChEBI" id="CHEBI:33019"/>
        <dbReference type="ChEBI" id="CHEBI:33384"/>
        <dbReference type="ChEBI" id="CHEBI:78442"/>
        <dbReference type="ChEBI" id="CHEBI:78533"/>
        <dbReference type="ChEBI" id="CHEBI:456215"/>
        <dbReference type="EC" id="6.1.1.11"/>
    </reaction>
</comment>
<comment type="pathway">
    <text evidence="1">Aminoacyl-tRNA biosynthesis; selenocysteinyl-tRNA(Sec) biosynthesis; L-seryl-tRNA(Sec) from L-serine and tRNA(Sec): step 1/1.</text>
</comment>
<comment type="subunit">
    <text evidence="1">Homodimer. The tRNA molecule binds across the dimer.</text>
</comment>
<comment type="subcellular location">
    <subcellularLocation>
        <location evidence="1">Cytoplasm</location>
    </subcellularLocation>
</comment>
<comment type="domain">
    <text evidence="1">Consists of two distinct domains, a catalytic core and a N-terminal extension that is involved in tRNA binding.</text>
</comment>
<comment type="similarity">
    <text evidence="1">Belongs to the class-II aminoacyl-tRNA synthetase family. Type-1 seryl-tRNA synthetase subfamily.</text>
</comment>
<dbReference type="EC" id="6.1.1.11" evidence="1"/>
<dbReference type="EMBL" id="AJ293306">
    <property type="protein sequence ID" value="CAC36357.1"/>
    <property type="molecule type" value="Genomic_DNA"/>
</dbReference>
<dbReference type="SMR" id="Q9AEN2"/>
<dbReference type="STRING" id="292.WI67_04680"/>
<dbReference type="eggNOG" id="COG0172">
    <property type="taxonomic scope" value="Bacteria"/>
</dbReference>
<dbReference type="UniPathway" id="UPA00906">
    <property type="reaction ID" value="UER00895"/>
</dbReference>
<dbReference type="GO" id="GO:0005737">
    <property type="term" value="C:cytoplasm"/>
    <property type="evidence" value="ECO:0007669"/>
    <property type="project" value="UniProtKB-SubCell"/>
</dbReference>
<dbReference type="GO" id="GO:0005524">
    <property type="term" value="F:ATP binding"/>
    <property type="evidence" value="ECO:0007669"/>
    <property type="project" value="UniProtKB-UniRule"/>
</dbReference>
<dbReference type="GO" id="GO:0004828">
    <property type="term" value="F:serine-tRNA ligase activity"/>
    <property type="evidence" value="ECO:0007669"/>
    <property type="project" value="UniProtKB-UniRule"/>
</dbReference>
<dbReference type="GO" id="GO:0016260">
    <property type="term" value="P:selenocysteine biosynthetic process"/>
    <property type="evidence" value="ECO:0007669"/>
    <property type="project" value="UniProtKB-UniRule"/>
</dbReference>
<dbReference type="GO" id="GO:0006434">
    <property type="term" value="P:seryl-tRNA aminoacylation"/>
    <property type="evidence" value="ECO:0007669"/>
    <property type="project" value="UniProtKB-UniRule"/>
</dbReference>
<dbReference type="CDD" id="cd00770">
    <property type="entry name" value="SerRS_core"/>
    <property type="match status" value="1"/>
</dbReference>
<dbReference type="Gene3D" id="3.30.930.10">
    <property type="entry name" value="Bira Bifunctional Protein, Domain 2"/>
    <property type="match status" value="1"/>
</dbReference>
<dbReference type="Gene3D" id="1.10.287.40">
    <property type="entry name" value="Serine-tRNA synthetase, tRNA binding domain"/>
    <property type="match status" value="1"/>
</dbReference>
<dbReference type="HAMAP" id="MF_00176">
    <property type="entry name" value="Ser_tRNA_synth_type1"/>
    <property type="match status" value="1"/>
</dbReference>
<dbReference type="InterPro" id="IPR002314">
    <property type="entry name" value="aa-tRNA-synt_IIb"/>
</dbReference>
<dbReference type="InterPro" id="IPR006195">
    <property type="entry name" value="aa-tRNA-synth_II"/>
</dbReference>
<dbReference type="InterPro" id="IPR045864">
    <property type="entry name" value="aa-tRNA-synth_II/BPL/LPL"/>
</dbReference>
<dbReference type="InterPro" id="IPR002317">
    <property type="entry name" value="Ser-tRNA-ligase_type_1"/>
</dbReference>
<dbReference type="InterPro" id="IPR015866">
    <property type="entry name" value="Ser-tRNA-synth_1_N"/>
</dbReference>
<dbReference type="InterPro" id="IPR042103">
    <property type="entry name" value="SerRS_1_N_sf"/>
</dbReference>
<dbReference type="InterPro" id="IPR033729">
    <property type="entry name" value="SerRS_core"/>
</dbReference>
<dbReference type="InterPro" id="IPR010978">
    <property type="entry name" value="tRNA-bd_arm"/>
</dbReference>
<dbReference type="NCBIfam" id="TIGR00414">
    <property type="entry name" value="serS"/>
    <property type="match status" value="1"/>
</dbReference>
<dbReference type="PANTHER" id="PTHR43697:SF1">
    <property type="entry name" value="SERINE--TRNA LIGASE"/>
    <property type="match status" value="1"/>
</dbReference>
<dbReference type="PANTHER" id="PTHR43697">
    <property type="entry name" value="SERYL-TRNA SYNTHETASE"/>
    <property type="match status" value="1"/>
</dbReference>
<dbReference type="Pfam" id="PF02403">
    <property type="entry name" value="Seryl_tRNA_N"/>
    <property type="match status" value="1"/>
</dbReference>
<dbReference type="Pfam" id="PF00587">
    <property type="entry name" value="tRNA-synt_2b"/>
    <property type="match status" value="1"/>
</dbReference>
<dbReference type="PIRSF" id="PIRSF001529">
    <property type="entry name" value="Ser-tRNA-synth_IIa"/>
    <property type="match status" value="1"/>
</dbReference>
<dbReference type="PRINTS" id="PR00981">
    <property type="entry name" value="TRNASYNTHSER"/>
</dbReference>
<dbReference type="SUPFAM" id="SSF55681">
    <property type="entry name" value="Class II aaRS and biotin synthetases"/>
    <property type="match status" value="1"/>
</dbReference>
<dbReference type="SUPFAM" id="SSF46589">
    <property type="entry name" value="tRNA-binding arm"/>
    <property type="match status" value="1"/>
</dbReference>
<dbReference type="PROSITE" id="PS50862">
    <property type="entry name" value="AA_TRNA_LIGASE_II"/>
    <property type="match status" value="1"/>
</dbReference>
<accession>Q9AEN2</accession>
<evidence type="ECO:0000255" key="1">
    <source>
        <dbReference type="HAMAP-Rule" id="MF_00176"/>
    </source>
</evidence>
<proteinExistence type="inferred from homology"/>
<gene>
    <name evidence="1" type="primary">serS</name>
</gene>
<sequence length="433" mass="47538">MLDIQLLRKDLDGVAKRLADRGYTLDVAAFSALEAERRAIQTRTEELQARRNTLSKQIGAMKAKGEDTSAVMAEVGGIGDEMKASAAKLDEIQARLSELLLGMPNLAHESVPVGKDEADNVEVRRWGTPRQFDFDVKDHVDIGTPLGLDFETGAKLAGARFTMLRGPIARLHRALAQFMLDTHTQQHGYSETYTPYIVNPEILYGTGQLPKFADDMFRVEKGGAENTVTQYLISTSEISLTNTVRESIVEASALPIKLTAHSPCFRSEAGSYGRDTRGMIRQHQFDKVEMVQIVAPESSYAALDEMVGHAEAILQKLGLPYRVVALCTGDMGFSAAKTFDLEVWLPAQNTYREISSCSNTEAFQARRMQARFRNAQGKPELVHTLNGSGLAVGRTLVAVLENYQNADGSVTVPEVLRPYMGGLERIDAPAQAS</sequence>